<protein>
    <recommendedName>
        <fullName evidence="1">Cell division protein ZipA</fullName>
    </recommendedName>
</protein>
<comment type="function">
    <text evidence="1">Essential cell division protein that stabilizes the FtsZ protofilaments by cross-linking them and that serves as a cytoplasmic membrane anchor for the Z ring. Also required for the recruitment to the septal ring of downstream cell division proteins.</text>
</comment>
<comment type="subunit">
    <text evidence="1">Interacts with FtsZ via their C-terminal domains.</text>
</comment>
<comment type="subcellular location">
    <subcellularLocation>
        <location evidence="1">Cell inner membrane</location>
        <topology evidence="1">Single-pass type I membrane protein</topology>
    </subcellularLocation>
    <text evidence="1">Localizes to the Z ring in an FtsZ-dependent manner.</text>
</comment>
<comment type="similarity">
    <text evidence="1">Belongs to the ZipA family.</text>
</comment>
<gene>
    <name evidence="1" type="primary">zipA</name>
    <name type="ordered locus">ECP_2436</name>
</gene>
<feature type="chain" id="PRO_0000258589" description="Cell division protein ZipA">
    <location>
        <begin position="1"/>
        <end position="332"/>
    </location>
</feature>
<feature type="topological domain" description="Periplasmic" evidence="1">
    <location>
        <begin position="1"/>
        <end position="6"/>
    </location>
</feature>
<feature type="transmembrane region" description="Helical" evidence="1">
    <location>
        <begin position="7"/>
        <end position="27"/>
    </location>
</feature>
<feature type="topological domain" description="Cytoplasmic" evidence="1">
    <location>
        <begin position="28"/>
        <end position="332"/>
    </location>
</feature>
<feature type="region of interest" description="Disordered" evidence="2">
    <location>
        <begin position="42"/>
        <end position="192"/>
    </location>
</feature>
<feature type="compositionally biased region" description="Acidic residues" evidence="2">
    <location>
        <begin position="51"/>
        <end position="63"/>
    </location>
</feature>
<feature type="compositionally biased region" description="Low complexity" evidence="2">
    <location>
        <begin position="99"/>
        <end position="115"/>
    </location>
</feature>
<feature type="compositionally biased region" description="Low complexity" evidence="2">
    <location>
        <begin position="123"/>
        <end position="150"/>
    </location>
</feature>
<feature type="compositionally biased region" description="Low complexity" evidence="2">
    <location>
        <begin position="160"/>
        <end position="175"/>
    </location>
</feature>
<dbReference type="EMBL" id="CP000247">
    <property type="protein sequence ID" value="ABG70425.1"/>
    <property type="molecule type" value="Genomic_DNA"/>
</dbReference>
<dbReference type="RefSeq" id="WP_000983143.1">
    <property type="nucleotide sequence ID" value="NC_008253.1"/>
</dbReference>
<dbReference type="SMR" id="Q0TF54"/>
<dbReference type="KEGG" id="ecp:ECP_2436"/>
<dbReference type="HOGENOM" id="CLU_030174_1_0_6"/>
<dbReference type="Proteomes" id="UP000009182">
    <property type="component" value="Chromosome"/>
</dbReference>
<dbReference type="GO" id="GO:0032153">
    <property type="term" value="C:cell division site"/>
    <property type="evidence" value="ECO:0007669"/>
    <property type="project" value="UniProtKB-UniRule"/>
</dbReference>
<dbReference type="GO" id="GO:0005886">
    <property type="term" value="C:plasma membrane"/>
    <property type="evidence" value="ECO:0007669"/>
    <property type="project" value="UniProtKB-SubCell"/>
</dbReference>
<dbReference type="GO" id="GO:0000917">
    <property type="term" value="P:division septum assembly"/>
    <property type="evidence" value="ECO:0007669"/>
    <property type="project" value="TreeGrafter"/>
</dbReference>
<dbReference type="GO" id="GO:0043093">
    <property type="term" value="P:FtsZ-dependent cytokinesis"/>
    <property type="evidence" value="ECO:0007669"/>
    <property type="project" value="UniProtKB-UniRule"/>
</dbReference>
<dbReference type="CDD" id="cd00231">
    <property type="entry name" value="ZipA"/>
    <property type="match status" value="1"/>
</dbReference>
<dbReference type="FunFam" id="3.30.1400.10:FF:000001">
    <property type="entry name" value="Cell division protein ZipA"/>
    <property type="match status" value="1"/>
</dbReference>
<dbReference type="Gene3D" id="3.30.1400.10">
    <property type="entry name" value="ZipA, C-terminal FtsZ-binding domain"/>
    <property type="match status" value="1"/>
</dbReference>
<dbReference type="HAMAP" id="MF_00509">
    <property type="entry name" value="ZipA"/>
    <property type="match status" value="1"/>
</dbReference>
<dbReference type="InterPro" id="IPR011919">
    <property type="entry name" value="Cell_div_ZipA"/>
</dbReference>
<dbReference type="InterPro" id="IPR007449">
    <property type="entry name" value="ZipA_FtsZ-bd_C"/>
</dbReference>
<dbReference type="InterPro" id="IPR036765">
    <property type="entry name" value="ZipA_FtsZ-bd_C_sf"/>
</dbReference>
<dbReference type="NCBIfam" id="TIGR02205">
    <property type="entry name" value="septum_zipA"/>
    <property type="match status" value="1"/>
</dbReference>
<dbReference type="PANTHER" id="PTHR38685">
    <property type="entry name" value="CELL DIVISION PROTEIN ZIPA"/>
    <property type="match status" value="1"/>
</dbReference>
<dbReference type="PANTHER" id="PTHR38685:SF1">
    <property type="entry name" value="CELL DIVISION PROTEIN ZIPA"/>
    <property type="match status" value="1"/>
</dbReference>
<dbReference type="Pfam" id="PF04354">
    <property type="entry name" value="ZipA_C"/>
    <property type="match status" value="1"/>
</dbReference>
<dbReference type="SMART" id="SM00771">
    <property type="entry name" value="ZipA_C"/>
    <property type="match status" value="1"/>
</dbReference>
<dbReference type="SUPFAM" id="SSF64383">
    <property type="entry name" value="Cell-division protein ZipA, C-terminal domain"/>
    <property type="match status" value="1"/>
</dbReference>
<organism>
    <name type="scientific">Escherichia coli O6:K15:H31 (strain 536 / UPEC)</name>
    <dbReference type="NCBI Taxonomy" id="362663"/>
    <lineage>
        <taxon>Bacteria</taxon>
        <taxon>Pseudomonadati</taxon>
        <taxon>Pseudomonadota</taxon>
        <taxon>Gammaproteobacteria</taxon>
        <taxon>Enterobacterales</taxon>
        <taxon>Enterobacteriaceae</taxon>
        <taxon>Escherichia</taxon>
    </lineage>
</organism>
<proteinExistence type="inferred from homology"/>
<evidence type="ECO:0000255" key="1">
    <source>
        <dbReference type="HAMAP-Rule" id="MF_00509"/>
    </source>
</evidence>
<evidence type="ECO:0000256" key="2">
    <source>
        <dbReference type="SAM" id="MobiDB-lite"/>
    </source>
</evidence>
<reference key="1">
    <citation type="journal article" date="2006" name="Mol. Microbiol.">
        <title>Role of pathogenicity island-associated integrases in the genome plasticity of uropathogenic Escherichia coli strain 536.</title>
        <authorList>
            <person name="Hochhut B."/>
            <person name="Wilde C."/>
            <person name="Balling G."/>
            <person name="Middendorf B."/>
            <person name="Dobrindt U."/>
            <person name="Brzuszkiewicz E."/>
            <person name="Gottschalk G."/>
            <person name="Carniel E."/>
            <person name="Hacker J."/>
        </authorList>
    </citation>
    <scope>NUCLEOTIDE SEQUENCE [LARGE SCALE GENOMIC DNA]</scope>
    <source>
        <strain>536 / UPEC</strain>
    </source>
</reference>
<keyword id="KW-0131">Cell cycle</keyword>
<keyword id="KW-0132">Cell division</keyword>
<keyword id="KW-0997">Cell inner membrane</keyword>
<keyword id="KW-1003">Cell membrane</keyword>
<keyword id="KW-0472">Membrane</keyword>
<keyword id="KW-0812">Transmembrane</keyword>
<keyword id="KW-1133">Transmembrane helix</keyword>
<name>ZIPA_ECOL5</name>
<accession>Q0TF54</accession>
<sequence length="332" mass="36965">MMQDLRLILIIVGAIAIIALLVHGFWTSRKERSSMFRDRPLKRMKSKRDDDSYDEDVEDDEGVGEVRVHRVNHAPANAQEHEAARPSPQHQYQPPYASAQPRQPVQQPPEAQVPPQHAPRPTQPVQQPVQQPAYQPQPEQPLQQPVSPQVASAPQPVHSAPQPAQQAFQPAEPVAAPQPEPVAEPAPVTDKPKRKEAVIIMNVAAHHGSELNGELLLNSIQQAGFIFGDMNIYHRHLSPDGSGPALFSLANMVKPGTFDPEMKDFTTPGVTIFMQVPSYGDELQNFKLMLQSAQHIADEVGGVVLDDQRRMMTPQKLREYQDIIREVKDANV</sequence>